<accession>Q7V8L8</accession>
<evidence type="ECO:0000255" key="1">
    <source>
        <dbReference type="HAMAP-Rule" id="MF_01864"/>
    </source>
</evidence>
<evidence type="ECO:0000255" key="2">
    <source>
        <dbReference type="PROSITE-ProRule" id="PRU01266"/>
    </source>
</evidence>
<gene>
    <name evidence="1" type="primary">miaB</name>
    <name type="ordered locus">PMT_0323</name>
</gene>
<name>MIAB_PROMM</name>
<organism>
    <name type="scientific">Prochlorococcus marinus (strain MIT 9313)</name>
    <dbReference type="NCBI Taxonomy" id="74547"/>
    <lineage>
        <taxon>Bacteria</taxon>
        <taxon>Bacillati</taxon>
        <taxon>Cyanobacteriota</taxon>
        <taxon>Cyanophyceae</taxon>
        <taxon>Synechococcales</taxon>
        <taxon>Prochlorococcaceae</taxon>
        <taxon>Prochlorococcus</taxon>
    </lineage>
</organism>
<proteinExistence type="inferred from homology"/>
<keyword id="KW-0004">4Fe-4S</keyword>
<keyword id="KW-0963">Cytoplasm</keyword>
<keyword id="KW-0408">Iron</keyword>
<keyword id="KW-0411">Iron-sulfur</keyword>
<keyword id="KW-0479">Metal-binding</keyword>
<keyword id="KW-1185">Reference proteome</keyword>
<keyword id="KW-0949">S-adenosyl-L-methionine</keyword>
<keyword id="KW-0808">Transferase</keyword>
<keyword id="KW-0819">tRNA processing</keyword>
<feature type="chain" id="PRO_0000374450" description="tRNA-2-methylthio-N(6)-dimethylallyladenosine synthase">
    <location>
        <begin position="1"/>
        <end position="480"/>
    </location>
</feature>
<feature type="domain" description="MTTase N-terminal" evidence="1">
    <location>
        <begin position="29"/>
        <end position="145"/>
    </location>
</feature>
<feature type="domain" description="Radical SAM core" evidence="2">
    <location>
        <begin position="166"/>
        <end position="403"/>
    </location>
</feature>
<feature type="domain" description="TRAM" evidence="1">
    <location>
        <begin position="406"/>
        <end position="474"/>
    </location>
</feature>
<feature type="binding site" evidence="1">
    <location>
        <position position="38"/>
    </location>
    <ligand>
        <name>[4Fe-4S] cluster</name>
        <dbReference type="ChEBI" id="CHEBI:49883"/>
        <label>1</label>
    </ligand>
</feature>
<feature type="binding site" evidence="1">
    <location>
        <position position="74"/>
    </location>
    <ligand>
        <name>[4Fe-4S] cluster</name>
        <dbReference type="ChEBI" id="CHEBI:49883"/>
        <label>1</label>
    </ligand>
</feature>
<feature type="binding site" evidence="1">
    <location>
        <position position="108"/>
    </location>
    <ligand>
        <name>[4Fe-4S] cluster</name>
        <dbReference type="ChEBI" id="CHEBI:49883"/>
        <label>1</label>
    </ligand>
</feature>
<feature type="binding site" evidence="1">
    <location>
        <position position="180"/>
    </location>
    <ligand>
        <name>[4Fe-4S] cluster</name>
        <dbReference type="ChEBI" id="CHEBI:49883"/>
        <label>2</label>
        <note>4Fe-4S-S-AdoMet</note>
    </ligand>
</feature>
<feature type="binding site" evidence="1">
    <location>
        <position position="184"/>
    </location>
    <ligand>
        <name>[4Fe-4S] cluster</name>
        <dbReference type="ChEBI" id="CHEBI:49883"/>
        <label>2</label>
        <note>4Fe-4S-S-AdoMet</note>
    </ligand>
</feature>
<feature type="binding site" evidence="1">
    <location>
        <position position="187"/>
    </location>
    <ligand>
        <name>[4Fe-4S] cluster</name>
        <dbReference type="ChEBI" id="CHEBI:49883"/>
        <label>2</label>
        <note>4Fe-4S-S-AdoMet</note>
    </ligand>
</feature>
<protein>
    <recommendedName>
        <fullName evidence="1">tRNA-2-methylthio-N(6)-dimethylallyladenosine synthase</fullName>
        <ecNumber evidence="1">2.8.4.3</ecNumber>
    </recommendedName>
    <alternativeName>
        <fullName evidence="1">(Dimethylallyl)adenosine tRNA methylthiotransferase MiaB</fullName>
    </alternativeName>
    <alternativeName>
        <fullName evidence="1">tRNA-i(6)A37 methylthiotransferase</fullName>
    </alternativeName>
</protein>
<comment type="function">
    <text evidence="1">Catalyzes the methylthiolation of N6-(dimethylallyl)adenosine (i(6)A), leading to the formation of 2-methylthio-N6-(dimethylallyl)adenosine (ms(2)i(6)A) at position 37 in tRNAs that read codons beginning with uridine.</text>
</comment>
<comment type="catalytic activity">
    <reaction evidence="1">
        <text>N(6)-dimethylallyladenosine(37) in tRNA + (sulfur carrier)-SH + AH2 + 2 S-adenosyl-L-methionine = 2-methylsulfanyl-N(6)-dimethylallyladenosine(37) in tRNA + (sulfur carrier)-H + 5'-deoxyadenosine + L-methionine + A + S-adenosyl-L-homocysteine + 2 H(+)</text>
        <dbReference type="Rhea" id="RHEA:37067"/>
        <dbReference type="Rhea" id="RHEA-COMP:10375"/>
        <dbReference type="Rhea" id="RHEA-COMP:10376"/>
        <dbReference type="Rhea" id="RHEA-COMP:14737"/>
        <dbReference type="Rhea" id="RHEA-COMP:14739"/>
        <dbReference type="ChEBI" id="CHEBI:13193"/>
        <dbReference type="ChEBI" id="CHEBI:15378"/>
        <dbReference type="ChEBI" id="CHEBI:17319"/>
        <dbReference type="ChEBI" id="CHEBI:17499"/>
        <dbReference type="ChEBI" id="CHEBI:29917"/>
        <dbReference type="ChEBI" id="CHEBI:57844"/>
        <dbReference type="ChEBI" id="CHEBI:57856"/>
        <dbReference type="ChEBI" id="CHEBI:59789"/>
        <dbReference type="ChEBI" id="CHEBI:64428"/>
        <dbReference type="ChEBI" id="CHEBI:74415"/>
        <dbReference type="ChEBI" id="CHEBI:74417"/>
        <dbReference type="EC" id="2.8.4.3"/>
    </reaction>
</comment>
<comment type="cofactor">
    <cofactor evidence="1">
        <name>[4Fe-4S] cluster</name>
        <dbReference type="ChEBI" id="CHEBI:49883"/>
    </cofactor>
    <text evidence="1">Binds 2 [4Fe-4S] clusters. One cluster is coordinated with 3 cysteines and an exchangeable S-adenosyl-L-methionine.</text>
</comment>
<comment type="subunit">
    <text evidence="1">Monomer.</text>
</comment>
<comment type="subcellular location">
    <subcellularLocation>
        <location evidence="1">Cytoplasm</location>
    </subcellularLocation>
</comment>
<comment type="similarity">
    <text evidence="1">Belongs to the methylthiotransferase family. MiaB subfamily.</text>
</comment>
<dbReference type="EC" id="2.8.4.3" evidence="1"/>
<dbReference type="EMBL" id="BX548175">
    <property type="protein sequence ID" value="CAE20498.1"/>
    <property type="molecule type" value="Genomic_DNA"/>
</dbReference>
<dbReference type="RefSeq" id="WP_011129702.1">
    <property type="nucleotide sequence ID" value="NC_005071.1"/>
</dbReference>
<dbReference type="SMR" id="Q7V8L8"/>
<dbReference type="KEGG" id="pmt:PMT_0323"/>
<dbReference type="eggNOG" id="COG0621">
    <property type="taxonomic scope" value="Bacteria"/>
</dbReference>
<dbReference type="HOGENOM" id="CLU_018697_2_2_3"/>
<dbReference type="OrthoDB" id="9805215at2"/>
<dbReference type="Proteomes" id="UP000001423">
    <property type="component" value="Chromosome"/>
</dbReference>
<dbReference type="GO" id="GO:0005737">
    <property type="term" value="C:cytoplasm"/>
    <property type="evidence" value="ECO:0007669"/>
    <property type="project" value="UniProtKB-SubCell"/>
</dbReference>
<dbReference type="GO" id="GO:0051539">
    <property type="term" value="F:4 iron, 4 sulfur cluster binding"/>
    <property type="evidence" value="ECO:0007669"/>
    <property type="project" value="UniProtKB-UniRule"/>
</dbReference>
<dbReference type="GO" id="GO:0046872">
    <property type="term" value="F:metal ion binding"/>
    <property type="evidence" value="ECO:0007669"/>
    <property type="project" value="UniProtKB-KW"/>
</dbReference>
<dbReference type="GO" id="GO:0035596">
    <property type="term" value="F:methylthiotransferase activity"/>
    <property type="evidence" value="ECO:0007669"/>
    <property type="project" value="InterPro"/>
</dbReference>
<dbReference type="GO" id="GO:0035600">
    <property type="term" value="P:tRNA methylthiolation"/>
    <property type="evidence" value="ECO:0007669"/>
    <property type="project" value="TreeGrafter"/>
</dbReference>
<dbReference type="CDD" id="cd01335">
    <property type="entry name" value="Radical_SAM"/>
    <property type="match status" value="1"/>
</dbReference>
<dbReference type="FunFam" id="3.40.50.12160:FF:000006">
    <property type="entry name" value="tRNA-2-methylthio-N(6)-dimethylallyladenosine synthase"/>
    <property type="match status" value="1"/>
</dbReference>
<dbReference type="FunFam" id="3.80.30.20:FF:000001">
    <property type="entry name" value="tRNA-2-methylthio-N(6)-dimethylallyladenosine synthase 2"/>
    <property type="match status" value="1"/>
</dbReference>
<dbReference type="Gene3D" id="3.40.50.12160">
    <property type="entry name" value="Methylthiotransferase, N-terminal domain"/>
    <property type="match status" value="1"/>
</dbReference>
<dbReference type="Gene3D" id="3.80.30.20">
    <property type="entry name" value="tm_1862 like domain"/>
    <property type="match status" value="1"/>
</dbReference>
<dbReference type="HAMAP" id="MF_01864">
    <property type="entry name" value="tRNA_metthiotr_MiaB"/>
    <property type="match status" value="1"/>
</dbReference>
<dbReference type="InterPro" id="IPR006638">
    <property type="entry name" value="Elp3/MiaA/NifB-like_rSAM"/>
</dbReference>
<dbReference type="InterPro" id="IPR005839">
    <property type="entry name" value="Methylthiotransferase"/>
</dbReference>
<dbReference type="InterPro" id="IPR020612">
    <property type="entry name" value="Methylthiotransferase_CS"/>
</dbReference>
<dbReference type="InterPro" id="IPR013848">
    <property type="entry name" value="Methylthiotransferase_N"/>
</dbReference>
<dbReference type="InterPro" id="IPR038135">
    <property type="entry name" value="Methylthiotransferase_N_sf"/>
</dbReference>
<dbReference type="InterPro" id="IPR006463">
    <property type="entry name" value="MiaB_methiolase"/>
</dbReference>
<dbReference type="InterPro" id="IPR007197">
    <property type="entry name" value="rSAM"/>
</dbReference>
<dbReference type="InterPro" id="IPR023404">
    <property type="entry name" value="rSAM_horseshoe"/>
</dbReference>
<dbReference type="InterPro" id="IPR002792">
    <property type="entry name" value="TRAM_dom"/>
</dbReference>
<dbReference type="NCBIfam" id="TIGR01574">
    <property type="entry name" value="miaB-methiolase"/>
    <property type="match status" value="1"/>
</dbReference>
<dbReference type="NCBIfam" id="TIGR00089">
    <property type="entry name" value="MiaB/RimO family radical SAM methylthiotransferase"/>
    <property type="match status" value="1"/>
</dbReference>
<dbReference type="PANTHER" id="PTHR43020">
    <property type="entry name" value="CDK5 REGULATORY SUBUNIT-ASSOCIATED PROTEIN 1"/>
    <property type="match status" value="1"/>
</dbReference>
<dbReference type="PANTHER" id="PTHR43020:SF2">
    <property type="entry name" value="MITOCHONDRIAL TRNA METHYLTHIOTRANSFERASE CDK5RAP1"/>
    <property type="match status" value="1"/>
</dbReference>
<dbReference type="Pfam" id="PF04055">
    <property type="entry name" value="Radical_SAM"/>
    <property type="match status" value="1"/>
</dbReference>
<dbReference type="Pfam" id="PF01938">
    <property type="entry name" value="TRAM"/>
    <property type="match status" value="1"/>
</dbReference>
<dbReference type="Pfam" id="PF00919">
    <property type="entry name" value="UPF0004"/>
    <property type="match status" value="1"/>
</dbReference>
<dbReference type="SFLD" id="SFLDF00273">
    <property type="entry name" value="(dimethylallyl)adenosine_tRNA"/>
    <property type="match status" value="1"/>
</dbReference>
<dbReference type="SFLD" id="SFLDG01082">
    <property type="entry name" value="B12-binding_domain_containing"/>
    <property type="match status" value="1"/>
</dbReference>
<dbReference type="SFLD" id="SFLDG01061">
    <property type="entry name" value="methylthiotransferase"/>
    <property type="match status" value="1"/>
</dbReference>
<dbReference type="SMART" id="SM00729">
    <property type="entry name" value="Elp3"/>
    <property type="match status" value="1"/>
</dbReference>
<dbReference type="SUPFAM" id="SSF102114">
    <property type="entry name" value="Radical SAM enzymes"/>
    <property type="match status" value="1"/>
</dbReference>
<dbReference type="PROSITE" id="PS51449">
    <property type="entry name" value="MTTASE_N"/>
    <property type="match status" value="1"/>
</dbReference>
<dbReference type="PROSITE" id="PS01278">
    <property type="entry name" value="MTTASE_RADICAL"/>
    <property type="match status" value="1"/>
</dbReference>
<dbReference type="PROSITE" id="PS51918">
    <property type="entry name" value="RADICAL_SAM"/>
    <property type="match status" value="1"/>
</dbReference>
<dbReference type="PROSITE" id="PS50926">
    <property type="entry name" value="TRAM"/>
    <property type="match status" value="1"/>
</dbReference>
<reference key="1">
    <citation type="journal article" date="2003" name="Nature">
        <title>Genome divergence in two Prochlorococcus ecotypes reflects oceanic niche differentiation.</title>
        <authorList>
            <person name="Rocap G."/>
            <person name="Larimer F.W."/>
            <person name="Lamerdin J.E."/>
            <person name="Malfatti S."/>
            <person name="Chain P."/>
            <person name="Ahlgren N.A."/>
            <person name="Arellano A."/>
            <person name="Coleman M."/>
            <person name="Hauser L."/>
            <person name="Hess W.R."/>
            <person name="Johnson Z.I."/>
            <person name="Land M.L."/>
            <person name="Lindell D."/>
            <person name="Post A.F."/>
            <person name="Regala W."/>
            <person name="Shah M."/>
            <person name="Shaw S.L."/>
            <person name="Steglich C."/>
            <person name="Sullivan M.B."/>
            <person name="Ting C.S."/>
            <person name="Tolonen A."/>
            <person name="Webb E.A."/>
            <person name="Zinser E.R."/>
            <person name="Chisholm S.W."/>
        </authorList>
    </citation>
    <scope>NUCLEOTIDE SEQUENCE [LARGE SCALE GENOMIC DNA]</scope>
    <source>
        <strain>MIT 9313</strain>
    </source>
</reference>
<sequence>MFRSFASPLALVATSAIASNPATTAQHQGSFWIQTFGCQMNKADSERMAGILEAMGYHEAPAELEADLVLYNTCTIRDNAEQKVYSYLGRQARRKRTHPHLKLVVAGCVAQQEGEALLRRIPELDLVMGPQHANRLEALLTQVDNGQQVVATDDNHILEDLTTARRDSTICAWVNVIYGCNERCTYCVVPSVRGKEQSRSPEAIRLEIEGLAARGFREITLLGQNIDAYGRDLPGITPEGRRQNTLTDLLHHIHDVEGIERIRFATSHPRYFTERLIEACFDLPKVCEHFHIPFQSGDNDVLKAMARGYTVERYRRIVNRIRELMPDAAISTDVIVAFPGETDAQFQNTLNLLEEVGFDQVNTAAYSPRPNTPAATWSNQLPEAVKVERLKQLNALVERIALQRNSRYSGKVEQVLAEGINPKKPQQLMGRTRTNRLTFFATEGPQGCRYSPGDLVDIQINSVRAFSLSGTPCEQTRSRH</sequence>